<gene>
    <name type="primary">pepN</name>
    <name type="ordered locus">b0932</name>
    <name type="ordered locus">JW0915</name>
</gene>
<dbReference type="EC" id="3.4.11.2" evidence="1 2 3"/>
<dbReference type="EMBL" id="X04020">
    <property type="protein sequence ID" value="CAA27647.1"/>
    <property type="molecule type" value="Genomic_DNA"/>
</dbReference>
<dbReference type="EMBL" id="X03709">
    <property type="protein sequence ID" value="CAA27336.1"/>
    <property type="molecule type" value="Genomic_DNA"/>
</dbReference>
<dbReference type="EMBL" id="M15676">
    <property type="protein sequence ID" value="AAA24318.1"/>
    <property type="molecule type" value="Genomic_DNA"/>
</dbReference>
<dbReference type="EMBL" id="U00096">
    <property type="protein sequence ID" value="AAC74018.1"/>
    <property type="molecule type" value="Genomic_DNA"/>
</dbReference>
<dbReference type="EMBL" id="AP009048">
    <property type="protein sequence ID" value="BAA35684.1"/>
    <property type="molecule type" value="Genomic_DNA"/>
</dbReference>
<dbReference type="EMBL" id="M15273">
    <property type="protein sequence ID" value="AAA24317.1"/>
    <property type="molecule type" value="Genomic_DNA"/>
</dbReference>
<dbReference type="PIR" id="C64833">
    <property type="entry name" value="DPECN"/>
</dbReference>
<dbReference type="RefSeq" id="NP_415452.1">
    <property type="nucleotide sequence ID" value="NC_000913.3"/>
</dbReference>
<dbReference type="RefSeq" id="WP_000193841.1">
    <property type="nucleotide sequence ID" value="NZ_SSZK01000002.1"/>
</dbReference>
<dbReference type="PDB" id="2DQ6">
    <property type="method" value="X-ray"/>
    <property type="resolution" value="1.50 A"/>
    <property type="chains" value="A=1-870"/>
</dbReference>
<dbReference type="PDB" id="2DQM">
    <property type="method" value="X-ray"/>
    <property type="resolution" value="1.60 A"/>
    <property type="chains" value="A=1-870"/>
</dbReference>
<dbReference type="PDB" id="2HPO">
    <property type="method" value="X-ray"/>
    <property type="resolution" value="1.65 A"/>
    <property type="chains" value="A=1-870"/>
</dbReference>
<dbReference type="PDB" id="2HPT">
    <property type="method" value="X-ray"/>
    <property type="resolution" value="2.30 A"/>
    <property type="chains" value="A=1-870"/>
</dbReference>
<dbReference type="PDB" id="2ZXG">
    <property type="method" value="X-ray"/>
    <property type="resolution" value="1.55 A"/>
    <property type="chains" value="A=1-870"/>
</dbReference>
<dbReference type="PDB" id="3B2P">
    <property type="method" value="X-ray"/>
    <property type="resolution" value="2.00 A"/>
    <property type="chains" value="A=1-870"/>
</dbReference>
<dbReference type="PDB" id="3B2X">
    <property type="method" value="X-ray"/>
    <property type="resolution" value="1.50 A"/>
    <property type="chains" value="A=1-870"/>
</dbReference>
<dbReference type="PDB" id="3B34">
    <property type="method" value="X-ray"/>
    <property type="resolution" value="1.30 A"/>
    <property type="chains" value="A=1-870"/>
</dbReference>
<dbReference type="PDB" id="3B37">
    <property type="method" value="X-ray"/>
    <property type="resolution" value="1.70 A"/>
    <property type="chains" value="A=1-870"/>
</dbReference>
<dbReference type="PDB" id="3B3B">
    <property type="method" value="X-ray"/>
    <property type="resolution" value="1.85 A"/>
    <property type="chains" value="A=1-870"/>
</dbReference>
<dbReference type="PDB" id="3KED">
    <property type="method" value="X-ray"/>
    <property type="resolution" value="2.30 A"/>
    <property type="chains" value="A=1-870"/>
</dbReference>
<dbReference type="PDB" id="3PUU">
    <property type="method" value="X-ray"/>
    <property type="resolution" value="2.15 A"/>
    <property type="chains" value="A=1-870"/>
</dbReference>
<dbReference type="PDB" id="3QJX">
    <property type="method" value="X-ray"/>
    <property type="resolution" value="1.45 A"/>
    <property type="chains" value="A=1-870"/>
</dbReference>
<dbReference type="PDB" id="4Q4E">
    <property type="method" value="X-ray"/>
    <property type="resolution" value="1.90 A"/>
    <property type="chains" value="A=1-870"/>
</dbReference>
<dbReference type="PDB" id="4Q4I">
    <property type="method" value="X-ray"/>
    <property type="resolution" value="2.31 A"/>
    <property type="chains" value="A=1-870"/>
</dbReference>
<dbReference type="PDB" id="4XMT">
    <property type="method" value="X-ray"/>
    <property type="resolution" value="2.00 A"/>
    <property type="chains" value="A=4-870"/>
</dbReference>
<dbReference type="PDB" id="4XMU">
    <property type="method" value="X-ray"/>
    <property type="resolution" value="2.91 A"/>
    <property type="chains" value="A=5-870"/>
</dbReference>
<dbReference type="PDB" id="4XMV">
    <property type="method" value="X-ray"/>
    <property type="resolution" value="2.92 A"/>
    <property type="chains" value="A=5-870"/>
</dbReference>
<dbReference type="PDB" id="4XMW">
    <property type="method" value="X-ray"/>
    <property type="resolution" value="2.20 A"/>
    <property type="chains" value="A=4-870"/>
</dbReference>
<dbReference type="PDB" id="4XMX">
    <property type="method" value="X-ray"/>
    <property type="resolution" value="2.30 A"/>
    <property type="chains" value="A=5-870"/>
</dbReference>
<dbReference type="PDB" id="4XMZ">
    <property type="method" value="X-ray"/>
    <property type="resolution" value="2.15 A"/>
    <property type="chains" value="A=4-870"/>
</dbReference>
<dbReference type="PDB" id="4XN1">
    <property type="method" value="X-ray"/>
    <property type="resolution" value="2.20 A"/>
    <property type="chains" value="A=4-870"/>
</dbReference>
<dbReference type="PDB" id="4XN2">
    <property type="method" value="X-ray"/>
    <property type="resolution" value="2.11 A"/>
    <property type="chains" value="A=5-870"/>
</dbReference>
<dbReference type="PDB" id="4XN4">
    <property type="method" value="X-ray"/>
    <property type="resolution" value="1.99 A"/>
    <property type="chains" value="A=5-870"/>
</dbReference>
<dbReference type="PDB" id="4XN5">
    <property type="method" value="X-ray"/>
    <property type="resolution" value="2.66 A"/>
    <property type="chains" value="A=5-870"/>
</dbReference>
<dbReference type="PDB" id="4XN7">
    <property type="method" value="X-ray"/>
    <property type="resolution" value="2.22 A"/>
    <property type="chains" value="A=5-870"/>
</dbReference>
<dbReference type="PDB" id="4XN8">
    <property type="method" value="X-ray"/>
    <property type="resolution" value="1.89 A"/>
    <property type="chains" value="A=5-870"/>
</dbReference>
<dbReference type="PDB" id="4XN9">
    <property type="method" value="X-ray"/>
    <property type="resolution" value="2.80 A"/>
    <property type="chains" value="A=5-870"/>
</dbReference>
<dbReference type="PDB" id="4XNA">
    <property type="method" value="X-ray"/>
    <property type="resolution" value="2.40 A"/>
    <property type="chains" value="A=5-870"/>
</dbReference>
<dbReference type="PDB" id="4XNB">
    <property type="method" value="X-ray"/>
    <property type="resolution" value="1.95 A"/>
    <property type="chains" value="A=5-870"/>
</dbReference>
<dbReference type="PDB" id="4XND">
    <property type="method" value="X-ray"/>
    <property type="resolution" value="1.93 A"/>
    <property type="chains" value="A=5-870"/>
</dbReference>
<dbReference type="PDB" id="4XO3">
    <property type="method" value="X-ray"/>
    <property type="resolution" value="2.00 A"/>
    <property type="chains" value="A=5-870"/>
</dbReference>
<dbReference type="PDB" id="4XO4">
    <property type="method" value="X-ray"/>
    <property type="resolution" value="2.18 A"/>
    <property type="chains" value="A=1-870"/>
</dbReference>
<dbReference type="PDB" id="4XO5">
    <property type="method" value="X-ray"/>
    <property type="resolution" value="1.98 A"/>
    <property type="chains" value="A=5-870"/>
</dbReference>
<dbReference type="PDB" id="5MFR">
    <property type="method" value="X-ray"/>
    <property type="resolution" value="1.40 A"/>
    <property type="chains" value="A=1-870"/>
</dbReference>
<dbReference type="PDB" id="5MFS">
    <property type="method" value="X-ray"/>
    <property type="resolution" value="1.57 A"/>
    <property type="chains" value="A=1-870"/>
</dbReference>
<dbReference type="PDB" id="5MFT">
    <property type="method" value="X-ray"/>
    <property type="resolution" value="1.59 A"/>
    <property type="chains" value="A=1-870"/>
</dbReference>
<dbReference type="PDB" id="5YO1">
    <property type="method" value="X-ray"/>
    <property type="resolution" value="2.50 A"/>
    <property type="chains" value="A=1-870"/>
</dbReference>
<dbReference type="PDB" id="5YQ1">
    <property type="method" value="X-ray"/>
    <property type="resolution" value="1.58 A"/>
    <property type="chains" value="A=1-870"/>
</dbReference>
<dbReference type="PDB" id="5YQ2">
    <property type="method" value="X-ray"/>
    <property type="resolution" value="1.60 A"/>
    <property type="chains" value="A=1-870"/>
</dbReference>
<dbReference type="PDB" id="5YQB">
    <property type="method" value="X-ray"/>
    <property type="resolution" value="1.56 A"/>
    <property type="chains" value="A=1-870"/>
</dbReference>
<dbReference type="PDB" id="6G8B">
    <property type="method" value="X-ray"/>
    <property type="resolution" value="2.37 A"/>
    <property type="chains" value="A=1-870"/>
</dbReference>
<dbReference type="PDBsum" id="2DQ6"/>
<dbReference type="PDBsum" id="2DQM"/>
<dbReference type="PDBsum" id="2HPO"/>
<dbReference type="PDBsum" id="2HPT"/>
<dbReference type="PDBsum" id="2ZXG"/>
<dbReference type="PDBsum" id="3B2P"/>
<dbReference type="PDBsum" id="3B2X"/>
<dbReference type="PDBsum" id="3B34"/>
<dbReference type="PDBsum" id="3B37"/>
<dbReference type="PDBsum" id="3B3B"/>
<dbReference type="PDBsum" id="3KED"/>
<dbReference type="PDBsum" id="3PUU"/>
<dbReference type="PDBsum" id="3QJX"/>
<dbReference type="PDBsum" id="4Q4E"/>
<dbReference type="PDBsum" id="4Q4I"/>
<dbReference type="PDBsum" id="4XMT"/>
<dbReference type="PDBsum" id="4XMU"/>
<dbReference type="PDBsum" id="4XMV"/>
<dbReference type="PDBsum" id="4XMW"/>
<dbReference type="PDBsum" id="4XMX"/>
<dbReference type="PDBsum" id="4XMZ"/>
<dbReference type="PDBsum" id="4XN1"/>
<dbReference type="PDBsum" id="4XN2"/>
<dbReference type="PDBsum" id="4XN4"/>
<dbReference type="PDBsum" id="4XN5"/>
<dbReference type="PDBsum" id="4XN7"/>
<dbReference type="PDBsum" id="4XN8"/>
<dbReference type="PDBsum" id="4XN9"/>
<dbReference type="PDBsum" id="4XNA"/>
<dbReference type="PDBsum" id="4XNB"/>
<dbReference type="PDBsum" id="4XND"/>
<dbReference type="PDBsum" id="4XO3"/>
<dbReference type="PDBsum" id="4XO4"/>
<dbReference type="PDBsum" id="4XO5"/>
<dbReference type="PDBsum" id="5MFR"/>
<dbReference type="PDBsum" id="5MFS"/>
<dbReference type="PDBsum" id="5MFT"/>
<dbReference type="PDBsum" id="5YO1"/>
<dbReference type="PDBsum" id="5YQ1"/>
<dbReference type="PDBsum" id="5YQ2"/>
<dbReference type="PDBsum" id="5YQB"/>
<dbReference type="PDBsum" id="6G8B"/>
<dbReference type="SMR" id="P04825"/>
<dbReference type="BioGRID" id="4261880">
    <property type="interactions" value="52"/>
</dbReference>
<dbReference type="BioGRID" id="851583">
    <property type="interactions" value="8"/>
</dbReference>
<dbReference type="DIP" id="DIP-10458N"/>
<dbReference type="FunCoup" id="P04825">
    <property type="interactions" value="501"/>
</dbReference>
<dbReference type="IntAct" id="P04825">
    <property type="interactions" value="13"/>
</dbReference>
<dbReference type="STRING" id="511145.b0932"/>
<dbReference type="BindingDB" id="P04825"/>
<dbReference type="ChEMBL" id="CHEMBL4325"/>
<dbReference type="DrugBank" id="DB08506">
    <property type="generic name" value="N-{(2S)-3-[(1R)-1-aminoethyl](hydroxy)phosphoryl-2-benzylpropanoyl}-L-phenylalanine"/>
</dbReference>
<dbReference type="MEROPS" id="M01.005"/>
<dbReference type="jPOST" id="P04825"/>
<dbReference type="PaxDb" id="511145-b0932"/>
<dbReference type="EnsemblBacteria" id="AAC74018">
    <property type="protein sequence ID" value="AAC74018"/>
    <property type="gene ID" value="b0932"/>
</dbReference>
<dbReference type="GeneID" id="947253"/>
<dbReference type="KEGG" id="ecj:JW0915"/>
<dbReference type="KEGG" id="eco:b0932"/>
<dbReference type="KEGG" id="ecoc:C3026_05725"/>
<dbReference type="PATRIC" id="fig|1411691.4.peg.1342"/>
<dbReference type="EchoBASE" id="EB0690"/>
<dbReference type="eggNOG" id="COG0308">
    <property type="taxonomic scope" value="Bacteria"/>
</dbReference>
<dbReference type="HOGENOM" id="CLU_007993_2_0_6"/>
<dbReference type="InParanoid" id="P04825"/>
<dbReference type="OMA" id="FKRWYSQ"/>
<dbReference type="OrthoDB" id="100605at2"/>
<dbReference type="PhylomeDB" id="P04825"/>
<dbReference type="BioCyc" id="EcoCyc:EG10696-MONOMER"/>
<dbReference type="BioCyc" id="MetaCyc:EG10696-MONOMER"/>
<dbReference type="BRENDA" id="3.4.11.2">
    <property type="organism ID" value="2026"/>
</dbReference>
<dbReference type="SABIO-RK" id="P04825"/>
<dbReference type="EvolutionaryTrace" id="P04825"/>
<dbReference type="PRO" id="PR:P04825"/>
<dbReference type="Proteomes" id="UP000000625">
    <property type="component" value="Chromosome"/>
</dbReference>
<dbReference type="GO" id="GO:0005886">
    <property type="term" value="C:plasma membrane"/>
    <property type="evidence" value="ECO:0007669"/>
    <property type="project" value="UniProtKB-SubCell"/>
</dbReference>
<dbReference type="GO" id="GO:0016285">
    <property type="term" value="F:alanyl aminopeptidase activity"/>
    <property type="evidence" value="ECO:0007669"/>
    <property type="project" value="UniProtKB-EC"/>
</dbReference>
<dbReference type="GO" id="GO:0004177">
    <property type="term" value="F:aminopeptidase activity"/>
    <property type="evidence" value="ECO:0000314"/>
    <property type="project" value="EcoliWiki"/>
</dbReference>
<dbReference type="GO" id="GO:0042802">
    <property type="term" value="F:identical protein binding"/>
    <property type="evidence" value="ECO:0000353"/>
    <property type="project" value="IntAct"/>
</dbReference>
<dbReference type="GO" id="GO:0008237">
    <property type="term" value="F:metallopeptidase activity"/>
    <property type="evidence" value="ECO:0007669"/>
    <property type="project" value="UniProtKB-KW"/>
</dbReference>
<dbReference type="GO" id="GO:0008270">
    <property type="term" value="F:zinc ion binding"/>
    <property type="evidence" value="ECO:0007669"/>
    <property type="project" value="InterPro"/>
</dbReference>
<dbReference type="GO" id="GO:0006508">
    <property type="term" value="P:proteolysis"/>
    <property type="evidence" value="ECO:0000315"/>
    <property type="project" value="EcoCyc"/>
</dbReference>
<dbReference type="CDD" id="cd09600">
    <property type="entry name" value="M1_APN"/>
    <property type="match status" value="1"/>
</dbReference>
<dbReference type="FunFam" id="1.10.390.10:FF:000002">
    <property type="entry name" value="Aminopeptidase N"/>
    <property type="match status" value="1"/>
</dbReference>
<dbReference type="FunFam" id="1.25.50.10:FF:000001">
    <property type="entry name" value="Aminopeptidase N"/>
    <property type="match status" value="1"/>
</dbReference>
<dbReference type="FunFam" id="2.60.40.1730:FF:000005">
    <property type="entry name" value="Aminopeptidase N"/>
    <property type="match status" value="1"/>
</dbReference>
<dbReference type="FunFam" id="2.60.40.1840:FF:000001">
    <property type="entry name" value="Aminopeptidase N"/>
    <property type="match status" value="1"/>
</dbReference>
<dbReference type="FunFam" id="3.30.2010.30:FF:000002">
    <property type="entry name" value="Putative aminopeptidase N"/>
    <property type="match status" value="1"/>
</dbReference>
<dbReference type="Gene3D" id="2.60.40.1840">
    <property type="match status" value="1"/>
</dbReference>
<dbReference type="Gene3D" id="3.30.2010.30">
    <property type="match status" value="1"/>
</dbReference>
<dbReference type="Gene3D" id="1.10.390.10">
    <property type="entry name" value="Neutral Protease Domain 2"/>
    <property type="match status" value="1"/>
</dbReference>
<dbReference type="Gene3D" id="1.25.50.10">
    <property type="entry name" value="Peptidase M1, alanyl aminopeptidase, C-terminal domain"/>
    <property type="match status" value="1"/>
</dbReference>
<dbReference type="Gene3D" id="2.60.40.1730">
    <property type="entry name" value="tricorn interacting facor f3 domain"/>
    <property type="match status" value="1"/>
</dbReference>
<dbReference type="InterPro" id="IPR045357">
    <property type="entry name" value="Aminopeptidase_N-like_N"/>
</dbReference>
<dbReference type="InterPro" id="IPR042097">
    <property type="entry name" value="Aminopeptidase_N-like_N_sf"/>
</dbReference>
<dbReference type="InterPro" id="IPR038438">
    <property type="entry name" value="PepN_Ig-like_sf"/>
</dbReference>
<dbReference type="InterPro" id="IPR001930">
    <property type="entry name" value="Peptidase_M1"/>
</dbReference>
<dbReference type="InterPro" id="IPR014782">
    <property type="entry name" value="Peptidase_M1_dom"/>
</dbReference>
<dbReference type="InterPro" id="IPR012779">
    <property type="entry name" value="Peptidase_M1_pepN"/>
</dbReference>
<dbReference type="InterPro" id="IPR024601">
    <property type="entry name" value="Peptidase_M1_pepN_C"/>
</dbReference>
<dbReference type="InterPro" id="IPR037144">
    <property type="entry name" value="Peptidase_M1_pepN_C_sf"/>
</dbReference>
<dbReference type="InterPro" id="IPR035414">
    <property type="entry name" value="Peptidase_M1_pepN_Ig-like"/>
</dbReference>
<dbReference type="InterPro" id="IPR027268">
    <property type="entry name" value="Peptidase_M4/M1_CTD_sf"/>
</dbReference>
<dbReference type="NCBIfam" id="TIGR02414">
    <property type="entry name" value="pepN_proteo"/>
    <property type="match status" value="1"/>
</dbReference>
<dbReference type="PANTHER" id="PTHR46322">
    <property type="entry name" value="PUROMYCIN-SENSITIVE AMINOPEPTIDASE"/>
    <property type="match status" value="1"/>
</dbReference>
<dbReference type="PANTHER" id="PTHR46322:SF1">
    <property type="entry name" value="PUROMYCIN-SENSITIVE AMINOPEPTIDASE"/>
    <property type="match status" value="1"/>
</dbReference>
<dbReference type="Pfam" id="PF11940">
    <property type="entry name" value="DUF3458"/>
    <property type="match status" value="1"/>
</dbReference>
<dbReference type="Pfam" id="PF17432">
    <property type="entry name" value="DUF3458_C"/>
    <property type="match status" value="1"/>
</dbReference>
<dbReference type="Pfam" id="PF01433">
    <property type="entry name" value="Peptidase_M1"/>
    <property type="match status" value="1"/>
</dbReference>
<dbReference type="Pfam" id="PF17900">
    <property type="entry name" value="Peptidase_M1_N"/>
    <property type="match status" value="1"/>
</dbReference>
<dbReference type="PRINTS" id="PR00756">
    <property type="entry name" value="ALADIPTASE"/>
</dbReference>
<dbReference type="SUPFAM" id="SSF63737">
    <property type="entry name" value="Leukotriene A4 hydrolase N-terminal domain"/>
    <property type="match status" value="1"/>
</dbReference>
<dbReference type="SUPFAM" id="SSF55486">
    <property type="entry name" value="Metalloproteases ('zincins'), catalytic domain"/>
    <property type="match status" value="1"/>
</dbReference>
<dbReference type="PROSITE" id="PS00142">
    <property type="entry name" value="ZINC_PROTEASE"/>
    <property type="match status" value="1"/>
</dbReference>
<comment type="function">
    <text evidence="1 2 3 10">Aminopeptidase N is involved in the degradation of intracellular peptides generated by protein breakdown during normal growth as well as in response to nutrient starvation.</text>
</comment>
<comment type="catalytic activity">
    <reaction evidence="1 2 3">
        <text>Release of an N-terminal amino acid, Xaa-|-Yaa- from a peptide, amide or arylamide. Xaa is preferably Ala, but may be most amino acids including Pro (slow action). When a terminal hydrophobic residue is followed by a prolyl residue, the two may be released as an intact Xaa-Pro dipeptide.</text>
        <dbReference type="EC" id="3.4.11.2"/>
    </reaction>
</comment>
<comment type="cofactor">
    <cofactor evidence="1 2 3">
        <name>Zn(2+)</name>
        <dbReference type="ChEBI" id="CHEBI:29105"/>
    </cofactor>
    <text evidence="1 2 3">Binds 1 zinc ion per subunit.</text>
</comment>
<comment type="interaction">
    <interactant intactId="EBI-545385">
        <id>P04825</id>
    </interactant>
    <interactant intactId="EBI-555059">
        <id>P19318</id>
        <label>narY</label>
    </interactant>
    <organismsDiffer>false</organismsDiffer>
    <experiments>3</experiments>
</comment>
<comment type="interaction">
    <interactant intactId="EBI-545385">
        <id>P04825</id>
    </interactant>
    <interactant intactId="EBI-545385">
        <id>P04825</id>
        <label>pepN</label>
    </interactant>
    <organismsDiffer>false</organismsDiffer>
    <experiments>2</experiments>
</comment>
<comment type="subcellular location">
    <subcellularLocation>
        <location>Cell inner membrane</location>
        <topology>Peripheral membrane protein</topology>
        <orientation>Cytoplasmic side</orientation>
    </subcellularLocation>
</comment>
<comment type="disruption phenotype">
    <text evidence="4">A quadruple peptidase disruption (pepA, pepB, pepD and pepN) does not grow in M9 minimal medium, does grow better when supplemented with casamino acids (PubMed:20067529).</text>
</comment>
<comment type="similarity">
    <text evidence="6">Belongs to the peptidase M1 family.</text>
</comment>
<keyword id="KW-0002">3D-structure</keyword>
<keyword id="KW-0031">Aminopeptidase</keyword>
<keyword id="KW-0997">Cell inner membrane</keyword>
<keyword id="KW-1003">Cell membrane</keyword>
<keyword id="KW-0903">Direct protein sequencing</keyword>
<keyword id="KW-0378">Hydrolase</keyword>
<keyword id="KW-0472">Membrane</keyword>
<keyword id="KW-0479">Metal-binding</keyword>
<keyword id="KW-0482">Metalloprotease</keyword>
<keyword id="KW-0645">Protease</keyword>
<keyword id="KW-1185">Reference proteome</keyword>
<keyword id="KW-0862">Zinc</keyword>
<evidence type="ECO:0000269" key="1">
    <source>
    </source>
</evidence>
<evidence type="ECO:0000269" key="2">
    <source>
    </source>
</evidence>
<evidence type="ECO:0000269" key="3">
    <source>
    </source>
</evidence>
<evidence type="ECO:0000269" key="4">
    <source>
    </source>
</evidence>
<evidence type="ECO:0000269" key="5">
    <source>
    </source>
</evidence>
<evidence type="ECO:0000305" key="6"/>
<evidence type="ECO:0000305" key="7">
    <source>
    </source>
</evidence>
<evidence type="ECO:0000305" key="8">
    <source>
    </source>
</evidence>
<evidence type="ECO:0000305" key="9">
    <source>
    </source>
</evidence>
<evidence type="ECO:0000305" key="10">
    <source>
    </source>
</evidence>
<evidence type="ECO:0007829" key="11">
    <source>
        <dbReference type="PDB" id="2DQ6"/>
    </source>
</evidence>
<evidence type="ECO:0007829" key="12">
    <source>
        <dbReference type="PDB" id="3B34"/>
    </source>
</evidence>
<evidence type="ECO:0007829" key="13">
    <source>
        <dbReference type="PDB" id="4XMU"/>
    </source>
</evidence>
<evidence type="ECO:0007829" key="14">
    <source>
        <dbReference type="PDB" id="5MFR"/>
    </source>
</evidence>
<organism>
    <name type="scientific">Escherichia coli (strain K12)</name>
    <dbReference type="NCBI Taxonomy" id="83333"/>
    <lineage>
        <taxon>Bacteria</taxon>
        <taxon>Pseudomonadati</taxon>
        <taxon>Pseudomonadota</taxon>
        <taxon>Gammaproteobacteria</taxon>
        <taxon>Enterobacterales</taxon>
        <taxon>Enterobacteriaceae</taxon>
        <taxon>Escherichia</taxon>
    </lineage>
</organism>
<sequence>MTQQPQAKYRHDYRAPDYQITDIDLTFDLDAQKTVVTAVSQAVRHGASDAPLRLNGEDLKLVSVHINDEPWTAWKEEEGALVISNLPERFTLKIINEISPAANTALEGLYQSGDALCTQCEAEGFRHITYYLDRPDVLARFTTKIIADKIKYPFLLSNGNRVAQGELENGRHWVQWQDPFPKPCYLFALVAGDFDVLRDTFTTRSGREVALELYVDRGNLDRAPWAMTSLKNSMKWDEERFGLEYDLDIYMIVAVDFFNMGAMENKGLNIFNSKYVLARTDTATDKDYLDIERVIGHEYFHNWTGNRVTCRDWFQLSLKEGLTVFRDQEFSSDLGSRAVNRINNVRTMRGLQFAEDASPMAHPIRPDMVIEMNNFYTLTVYEKGAEVIRMIHTLLGEENFQKGMQLYFERHDGSAATCDDFVQAMEDASNVDLSHFRRWYSQSGTPIVTVKDDYNPETEQYTLTISQRTPATPDQAEKQPLHIPFAIELYDNEGKVIPLQKGGHPVNSVLNVTQAEQTFVFDNVYFQPVPALLCEFSAPVKLEYKWSDQQLTFLMRHARNDFSRWDAAQSLLATYIKLNVARHQQGQPLSLPVHVADAFRAVLLDEKIDPALAAEILTLPSVNEMAELFDIIDPIAIAEVREALTRTLATELADELLAIYNANYQSEYRVEHEDIAKRTLRNACLRFLAFGETHLADVLVSKQFHEANNMTDALAALSAAVAAQLPCRDALMQEYDDKWHQNGLVMDKWFILQATSPAANVLETVRGLLQHRSFTMSNPNRIRSLIGAFAGSNPAAFHAEDGSGYLFLVEMLTDLNSRNPQVASRLIEPLIRLKRYDAKRQEKMRAALEQLKGLENLSGDLYEKITKALA</sequence>
<protein>
    <recommendedName>
        <fullName>Aminopeptidase N</fullName>
        <ecNumber evidence="1 2 3">3.4.11.2</ecNumber>
    </recommendedName>
    <alternativeName>
        <fullName>Alpha-aminoacylpeptide hydrolase</fullName>
    </alternativeName>
</protein>
<accession>P04825</accession>
<reference key="1">
    <citation type="journal article" date="1986" name="Gene">
        <title>Nucleotide sequence of the pepN gene encoding aminopeptidase N of Escherichia coli.</title>
        <authorList>
            <person name="Foglino M."/>
            <person name="Gharbi S."/>
            <person name="Lazdunski A."/>
        </authorList>
    </citation>
    <scope>NUCLEOTIDE SEQUENCE [GENOMIC DNA]</scope>
</reference>
<reference key="2">
    <citation type="journal article" date="1986" name="Gene">
        <title>The nucleotide sequence of the pepN gene and its over-expression in Escherichia coli.</title>
        <authorList>
            <person name="McCaman M.T."/>
            <person name="Gabe J.D."/>
        </authorList>
    </citation>
    <scope>NUCLEOTIDE SEQUENCE [GENOMIC DNA]</scope>
    <source>
        <strain>K12</strain>
    </source>
</reference>
<reference key="3">
    <citation type="journal article" date="1996" name="DNA Res.">
        <title>A 718-kb DNA sequence of the Escherichia coli K-12 genome corresponding to the 12.7-28.0 min region on the linkage map.</title>
        <authorList>
            <person name="Oshima T."/>
            <person name="Aiba H."/>
            <person name="Baba T."/>
            <person name="Fujita K."/>
            <person name="Hayashi K."/>
            <person name="Honjo A."/>
            <person name="Ikemoto K."/>
            <person name="Inada T."/>
            <person name="Itoh T."/>
            <person name="Kajihara M."/>
            <person name="Kanai K."/>
            <person name="Kashimoto K."/>
            <person name="Kimura S."/>
            <person name="Kitagawa M."/>
            <person name="Makino K."/>
            <person name="Masuda S."/>
            <person name="Miki T."/>
            <person name="Mizobuchi K."/>
            <person name="Mori H."/>
            <person name="Motomura K."/>
            <person name="Nakamura Y."/>
            <person name="Nashimoto H."/>
            <person name="Nishio Y."/>
            <person name="Saito N."/>
            <person name="Sampei G."/>
            <person name="Seki Y."/>
            <person name="Tagami H."/>
            <person name="Takemoto K."/>
            <person name="Wada C."/>
            <person name="Yamamoto Y."/>
            <person name="Yano M."/>
            <person name="Horiuchi T."/>
        </authorList>
    </citation>
    <scope>NUCLEOTIDE SEQUENCE [LARGE SCALE GENOMIC DNA]</scope>
    <source>
        <strain>K12 / W3110 / ATCC 27325 / DSM 5911</strain>
    </source>
</reference>
<reference key="4">
    <citation type="journal article" date="1997" name="Science">
        <title>The complete genome sequence of Escherichia coli K-12.</title>
        <authorList>
            <person name="Blattner F.R."/>
            <person name="Plunkett G. III"/>
            <person name="Bloch C.A."/>
            <person name="Perna N.T."/>
            <person name="Burland V."/>
            <person name="Riley M."/>
            <person name="Collado-Vides J."/>
            <person name="Glasner J.D."/>
            <person name="Rode C.K."/>
            <person name="Mayhew G.F."/>
            <person name="Gregor J."/>
            <person name="Davis N.W."/>
            <person name="Kirkpatrick H.A."/>
            <person name="Goeden M.A."/>
            <person name="Rose D.J."/>
            <person name="Mau B."/>
            <person name="Shao Y."/>
        </authorList>
    </citation>
    <scope>NUCLEOTIDE SEQUENCE [LARGE SCALE GENOMIC DNA]</scope>
    <source>
        <strain>K12 / MG1655 / ATCC 47076</strain>
    </source>
</reference>
<reference key="5">
    <citation type="journal article" date="2006" name="Mol. Syst. Biol.">
        <title>Highly accurate genome sequences of Escherichia coli K-12 strains MG1655 and W3110.</title>
        <authorList>
            <person name="Hayashi K."/>
            <person name="Morooka N."/>
            <person name="Yamamoto Y."/>
            <person name="Fujita K."/>
            <person name="Isono K."/>
            <person name="Choi S."/>
            <person name="Ohtsubo E."/>
            <person name="Baba T."/>
            <person name="Wanner B.L."/>
            <person name="Mori H."/>
            <person name="Horiuchi T."/>
        </authorList>
    </citation>
    <scope>NUCLEOTIDE SEQUENCE [LARGE SCALE GENOMIC DNA]</scope>
    <source>
        <strain>K12 / W3110 / ATCC 27325 / DSM 5911</strain>
    </source>
</reference>
<reference key="6">
    <citation type="journal article" date="1986" name="Mol. Gen. Genet.">
        <title>Sequence of the promoter and 5' coding region of pepN, and the amino-terminus of peptidase N from Escherichia coli K-12.</title>
        <authorList>
            <person name="McCaman M.T."/>
            <person name="Gabe J.D."/>
        </authorList>
    </citation>
    <scope>NUCLEOTIDE SEQUENCE [GENOMIC DNA] OF 1-242</scope>
    <source>
        <strain>K12</strain>
    </source>
</reference>
<reference key="7">
    <citation type="journal article" date="1986" name="Eur. J. Biochem.">
        <title>Nucleotide sequence of the promoter and amino-terminal encoding region of the Escherichia coli pepN gene.</title>
        <authorList>
            <person name="Bally M."/>
            <person name="Foglino M."/>
            <person name="Bruschi M."/>
            <person name="Murgier M."/>
            <person name="Lazdunski A."/>
        </authorList>
    </citation>
    <scope>NUCLEOTIDE SEQUENCE [GENOMIC DNA] OF 1-177</scope>
    <scope>PROTEIN SEQUENCE OF 2-22</scope>
</reference>
<reference key="8">
    <citation type="journal article" date="2010" name="FEMS Microbiol. Lett.">
        <title>Effect of multidrug-efflux transporter genes on dipeptide resistance and overproduction in Escherichia coli.</title>
        <authorList>
            <person name="Hayashi M."/>
            <person name="Tabata K."/>
            <person name="Yagasaki M."/>
            <person name="Yonetani Y."/>
        </authorList>
    </citation>
    <scope>FUNCTION IN PEPTIDE DEGRADATION</scope>
    <scope>DISRUPTION PHENOTYPE</scope>
    <source>
        <strain>K12 / JM101 / ATCC 33876 / DSM 3948 / NCIMB 11926</strain>
    </source>
</reference>
<reference key="9">
    <citation type="journal article" date="2006" name="J. Biol. Chem.">
        <title>Crystal structure of aminopeptidase N (proteobacteria alanyl aminopeptidase) from Escherichia coli and conformational change of methionine 260 involved in substrate recognition.</title>
        <authorList>
            <person name="Ito K."/>
            <person name="Nakajima Y."/>
            <person name="Onohara Y."/>
            <person name="Takeo M."/>
            <person name="Nakashima K."/>
            <person name="Matsubara F."/>
            <person name="Ito T."/>
            <person name="Yoshimoto T."/>
        </authorList>
    </citation>
    <scope>X-RAY CRYSTALLOGRAPHY (1.5 ANGSTROMS) IN COMPLEX WITH ZINC IONS AND BESTATIN</scope>
    <scope>FUNCTION</scope>
    <scope>ACTIVE SITE</scope>
    <scope>COFACTOR</scope>
    <scope>CATALYTIC ACTIVITY</scope>
</reference>
<reference key="10">
    <citation type="journal article" date="2008" name="Biochemistry">
        <title>Structural basis for the unusual specificity of Escherichia coli aminopeptidase N.</title>
        <authorList>
            <person name="Addlagatta A."/>
            <person name="Gay L."/>
            <person name="Matthews B.W."/>
        </authorList>
    </citation>
    <scope>X-RAY CRYSTALLOGRAPHY (1.3 ANGSTROMS) IN COMPLEXES WITH ZINC IONS AND SUBSTRATE ANALOGS</scope>
    <scope>FUNCTION</scope>
    <scope>CATALYTIC ACTIVITY</scope>
    <scope>ACTIVE SITE</scope>
    <scope>COFACTOR</scope>
</reference>
<reference key="11">
    <citation type="journal article" date="2009" name="Acta Crystallogr. D">
        <title>Structure of aminopeptidase N from Escherichia coli complexed with the transition-state analogue aminophosphinic inhibitor PL250.</title>
        <authorList>
            <person name="Fournie-Zaluski M.C."/>
            <person name="Poras H."/>
            <person name="Roques B.P."/>
            <person name="Nakajima Y."/>
            <person name="Ito K."/>
            <person name="Yoshimoto T."/>
        </authorList>
    </citation>
    <scope>X-RAY CRYSTALLOGRAPHY (1.55 ANGSTROMS) IN COMPLEX WITH ZINC IONS AND TRANSITION-STATE ANALOG PL250</scope>
    <scope>FUNCTION</scope>
    <scope>ACTIVE SITE</scope>
    <scope>COFACTOR</scope>
    <scope>CATALYTIC ACTIVITY</scope>
</reference>
<feature type="initiator methionine" description="Removed" evidence="5">
    <location>
        <position position="1"/>
    </location>
</feature>
<feature type="chain" id="PRO_0000095069" description="Aminopeptidase N">
    <location>
        <begin position="2"/>
        <end position="870"/>
    </location>
</feature>
<feature type="active site" description="Proton acceptor" evidence="7 8 9">
    <location>
        <position position="298"/>
    </location>
</feature>
<feature type="binding site">
    <location>
        <position position="121"/>
    </location>
    <ligand>
        <name>substrate</name>
    </ligand>
</feature>
<feature type="binding site">
    <location>
        <begin position="261"/>
        <end position="265"/>
    </location>
    <ligand>
        <name>substrate</name>
    </ligand>
</feature>
<feature type="binding site">
    <location>
        <position position="297"/>
    </location>
    <ligand>
        <name>Zn(2+)</name>
        <dbReference type="ChEBI" id="CHEBI:29105"/>
        <note>catalytic</note>
    </ligand>
</feature>
<feature type="binding site">
    <location>
        <position position="301"/>
    </location>
    <ligand>
        <name>Zn(2+)</name>
        <dbReference type="ChEBI" id="CHEBI:29105"/>
        <note>catalytic</note>
    </ligand>
</feature>
<feature type="binding site">
    <location>
        <position position="320"/>
    </location>
    <ligand>
        <name>Zn(2+)</name>
        <dbReference type="ChEBI" id="CHEBI:29105"/>
        <note>catalytic</note>
    </ligand>
</feature>
<feature type="site" description="Transition state stabilizer" evidence="6">
    <location>
        <position position="381"/>
    </location>
</feature>
<feature type="sequence conflict" description="In Ref. 7; CAA27647." evidence="6" ref="7">
    <original>E</original>
    <variation>D</variation>
    <location>
        <position position="76"/>
    </location>
</feature>
<feature type="helix" evidence="12">
    <location>
        <begin position="10"/>
        <end position="12"/>
    </location>
</feature>
<feature type="strand" evidence="12">
    <location>
        <begin position="17"/>
        <end position="28"/>
    </location>
</feature>
<feature type="strand" evidence="12">
    <location>
        <begin position="34"/>
        <end position="44"/>
    </location>
</feature>
<feature type="strand" evidence="12">
    <location>
        <begin position="52"/>
        <end position="55"/>
    </location>
</feature>
<feature type="strand" evidence="12">
    <location>
        <begin position="60"/>
        <end position="66"/>
    </location>
</feature>
<feature type="strand" evidence="12">
    <location>
        <begin position="73"/>
        <end position="77"/>
    </location>
</feature>
<feature type="strand" evidence="12">
    <location>
        <begin position="80"/>
        <end position="83"/>
    </location>
</feature>
<feature type="strand" evidence="12">
    <location>
        <begin position="88"/>
        <end position="98"/>
    </location>
</feature>
<feature type="helix" evidence="12">
    <location>
        <begin position="100"/>
        <end position="102"/>
    </location>
</feature>
<feature type="strand" evidence="12">
    <location>
        <begin position="108"/>
        <end position="112"/>
    </location>
</feature>
<feature type="strand" evidence="12">
    <location>
        <begin position="115"/>
        <end position="119"/>
    </location>
</feature>
<feature type="turn" evidence="12">
    <location>
        <begin position="121"/>
        <end position="124"/>
    </location>
</feature>
<feature type="helix" evidence="12">
    <location>
        <begin position="125"/>
        <end position="127"/>
    </location>
</feature>
<feature type="strand" evidence="12">
    <location>
        <begin position="129"/>
        <end position="131"/>
    </location>
</feature>
<feature type="strand" evidence="12">
    <location>
        <begin position="139"/>
        <end position="148"/>
    </location>
</feature>
<feature type="turn" evidence="12">
    <location>
        <begin position="149"/>
        <end position="151"/>
    </location>
</feature>
<feature type="strand" evidence="12">
    <location>
        <begin position="154"/>
        <end position="166"/>
    </location>
</feature>
<feature type="helix" evidence="14">
    <location>
        <begin position="168"/>
        <end position="170"/>
    </location>
</feature>
<feature type="strand" evidence="12">
    <location>
        <begin position="171"/>
        <end position="182"/>
    </location>
</feature>
<feature type="helix" evidence="12">
    <location>
        <begin position="184"/>
        <end position="186"/>
    </location>
</feature>
<feature type="strand" evidence="12">
    <location>
        <begin position="189"/>
        <end position="192"/>
    </location>
</feature>
<feature type="strand" evidence="12">
    <location>
        <begin position="195"/>
        <end position="202"/>
    </location>
</feature>
<feature type="strand" evidence="12">
    <location>
        <begin position="208"/>
        <end position="215"/>
    </location>
</feature>
<feature type="helix" evidence="12">
    <location>
        <begin position="220"/>
        <end position="222"/>
    </location>
</feature>
<feature type="helix" evidence="12">
    <location>
        <begin position="224"/>
        <end position="241"/>
    </location>
</feature>
<feature type="strand" evidence="12">
    <location>
        <begin position="247"/>
        <end position="256"/>
    </location>
</feature>
<feature type="strand" evidence="12">
    <location>
        <begin position="259"/>
        <end position="263"/>
    </location>
</feature>
<feature type="strand" evidence="12">
    <location>
        <begin position="268"/>
        <end position="272"/>
    </location>
</feature>
<feature type="helix" evidence="12">
    <location>
        <begin position="273"/>
        <end position="275"/>
    </location>
</feature>
<feature type="turn" evidence="12">
    <location>
        <begin position="280"/>
        <end position="282"/>
    </location>
</feature>
<feature type="helix" evidence="12">
    <location>
        <begin position="285"/>
        <end position="300"/>
    </location>
</feature>
<feature type="turn" evidence="12">
    <location>
        <begin position="301"/>
        <end position="303"/>
    </location>
</feature>
<feature type="turn" evidence="12">
    <location>
        <begin position="305"/>
        <end position="307"/>
    </location>
</feature>
<feature type="strand" evidence="12">
    <location>
        <begin position="308"/>
        <end position="312"/>
    </location>
</feature>
<feature type="helix" evidence="12">
    <location>
        <begin position="313"/>
        <end position="315"/>
    </location>
</feature>
<feature type="helix" evidence="12">
    <location>
        <begin position="316"/>
        <end position="334"/>
    </location>
</feature>
<feature type="helix" evidence="12">
    <location>
        <begin position="337"/>
        <end position="350"/>
    </location>
</feature>
<feature type="helix" evidence="12">
    <location>
        <begin position="352"/>
        <end position="356"/>
    </location>
</feature>
<feature type="strand" evidence="12">
    <location>
        <begin position="367"/>
        <end position="370"/>
    </location>
</feature>
<feature type="helix" evidence="12">
    <location>
        <begin position="372"/>
        <end position="375"/>
    </location>
</feature>
<feature type="helix" evidence="12">
    <location>
        <begin position="378"/>
        <end position="411"/>
    </location>
</feature>
<feature type="strand" evidence="12">
    <location>
        <begin position="414"/>
        <end position="416"/>
    </location>
</feature>
<feature type="helix" evidence="12">
    <location>
        <begin position="418"/>
        <end position="429"/>
    </location>
</feature>
<feature type="turn" evidence="12">
    <location>
        <begin position="434"/>
        <end position="437"/>
    </location>
</feature>
<feature type="helix" evidence="12">
    <location>
        <begin position="438"/>
        <end position="441"/>
    </location>
</feature>
<feature type="strand" evidence="12">
    <location>
        <begin position="447"/>
        <end position="455"/>
    </location>
</feature>
<feature type="turn" evidence="12">
    <location>
        <begin position="456"/>
        <end position="459"/>
    </location>
</feature>
<feature type="strand" evidence="12">
    <location>
        <begin position="460"/>
        <end position="468"/>
    </location>
</feature>
<feature type="strand" evidence="12">
    <location>
        <begin position="483"/>
        <end position="490"/>
    </location>
</feature>
<feature type="strand" evidence="13">
    <location>
        <begin position="500"/>
        <end position="505"/>
    </location>
</feature>
<feature type="strand" evidence="12">
    <location>
        <begin position="508"/>
        <end position="512"/>
    </location>
</feature>
<feature type="strand" evidence="12">
    <location>
        <begin position="514"/>
        <end position="521"/>
    </location>
</feature>
<feature type="strand" evidence="12">
    <location>
        <begin position="529"/>
        <end position="533"/>
    </location>
</feature>
<feature type="helix" evidence="11">
    <location>
        <begin position="534"/>
        <end position="536"/>
    </location>
</feature>
<feature type="strand" evidence="12">
    <location>
        <begin position="541"/>
        <end position="543"/>
    </location>
</feature>
<feature type="helix" evidence="12">
    <location>
        <begin position="548"/>
        <end position="557"/>
    </location>
</feature>
<feature type="helix" evidence="12">
    <location>
        <begin position="561"/>
        <end position="584"/>
    </location>
</feature>
<feature type="helix" evidence="12">
    <location>
        <begin position="593"/>
        <end position="604"/>
    </location>
</feature>
<feature type="strand" evidence="12">
    <location>
        <begin position="606"/>
        <end position="608"/>
    </location>
</feature>
<feature type="helix" evidence="12">
    <location>
        <begin position="610"/>
        <end position="616"/>
    </location>
</feature>
<feature type="helix" evidence="12">
    <location>
        <begin position="622"/>
        <end position="626"/>
    </location>
</feature>
<feature type="helix" evidence="12">
    <location>
        <begin position="634"/>
        <end position="651"/>
    </location>
</feature>
<feature type="helix" evidence="12">
    <location>
        <begin position="653"/>
        <end position="662"/>
    </location>
</feature>
<feature type="helix" evidence="12">
    <location>
        <begin position="672"/>
        <end position="689"/>
    </location>
</feature>
<feature type="helix" evidence="12">
    <location>
        <begin position="693"/>
        <end position="706"/>
    </location>
</feature>
<feature type="helix" evidence="12">
    <location>
        <begin position="710"/>
        <end position="722"/>
    </location>
</feature>
<feature type="helix" evidence="12">
    <location>
        <begin position="728"/>
        <end position="739"/>
    </location>
</feature>
<feature type="helix" evidence="12">
    <location>
        <begin position="743"/>
        <end position="754"/>
    </location>
</feature>
<feature type="helix" evidence="12">
    <location>
        <begin position="761"/>
        <end position="768"/>
    </location>
</feature>
<feature type="helix" evidence="12">
    <location>
        <begin position="779"/>
        <end position="792"/>
    </location>
</feature>
<feature type="helix" evidence="12">
    <location>
        <begin position="794"/>
        <end position="797"/>
    </location>
</feature>
<feature type="helix" evidence="12">
    <location>
        <begin position="803"/>
        <end position="818"/>
    </location>
</feature>
<feature type="helix" evidence="12">
    <location>
        <begin position="820"/>
        <end position="831"/>
    </location>
</feature>
<feature type="helix" evidence="12">
    <location>
        <begin position="832"/>
        <end position="835"/>
    </location>
</feature>
<feature type="helix" evidence="12">
    <location>
        <begin position="838"/>
        <end position="852"/>
    </location>
</feature>
<feature type="helix" evidence="12">
    <location>
        <begin position="859"/>
        <end position="869"/>
    </location>
</feature>
<proteinExistence type="evidence at protein level"/>
<name>AMPN_ECOLI</name>